<sequence>MSKETFQRNKPHINIGTIGHVDHGKTTLTAAITRALSGDGLASFRDYSSIDNTPEEKARGITINASHVEYETPNRHYAHVDCPGHADYVKNMITGAAQMDGAILVVSATDGAMPQTKEHILLARQVGVPYIVVFLNKVDMISQEDAELIDLVEMELSELLEEKGYKGCPIIRGSALKALEGDANYIEKVRELMQAVDDNIPTPEREIDKPFLMPIEDVFSISGRGTVVTGRIERGIVKVSDKVQLVGLGETKETIVTGVEMFRKELPEGRAGENVGLLLRGIGKNDVERGMVVCQPNSVKPHTKFKSAVYVLQKEEGGRHKPFFSGYRPQFFFRTTDVTGVVTLPEGTEMVMPGDNVELDVELIGTVALEEGMRFAIREGGRTIGAGTISKINA</sequence>
<proteinExistence type="inferred from homology"/>
<protein>
    <recommendedName>
        <fullName evidence="2">Elongation factor Tu</fullName>
        <shortName evidence="2">EF-Tu</shortName>
        <ecNumber evidence="2">3.6.5.3</ecNumber>
    </recommendedName>
</protein>
<accession>Q9Z9A7</accession>
<accession>Q9JQB9</accession>
<dbReference type="EC" id="3.6.5.3" evidence="2"/>
<dbReference type="EMBL" id="AE001363">
    <property type="protein sequence ID" value="AAD18227.1"/>
    <property type="molecule type" value="Genomic_DNA"/>
</dbReference>
<dbReference type="EMBL" id="AE002161">
    <property type="protein sequence ID" value="AAF38509.1"/>
    <property type="molecule type" value="Genomic_DNA"/>
</dbReference>
<dbReference type="EMBL" id="BA000008">
    <property type="protein sequence ID" value="BAA98284.1"/>
    <property type="molecule type" value="Genomic_DNA"/>
</dbReference>
<dbReference type="EMBL" id="AE009440">
    <property type="protein sequence ID" value="AAP98007.1"/>
    <property type="molecule type" value="Genomic_DNA"/>
</dbReference>
<dbReference type="PIR" id="B86500">
    <property type="entry name" value="B86500"/>
</dbReference>
<dbReference type="PIR" id="F72123">
    <property type="entry name" value="F72123"/>
</dbReference>
<dbReference type="RefSeq" id="NP_224282.1">
    <property type="nucleotide sequence ID" value="NC_000922.1"/>
</dbReference>
<dbReference type="RefSeq" id="WP_010882724.1">
    <property type="nucleotide sequence ID" value="NZ_LN847257.1"/>
</dbReference>
<dbReference type="SMR" id="Q9Z9A7"/>
<dbReference type="STRING" id="406984.CPK_ORF00581"/>
<dbReference type="GeneID" id="45050118"/>
<dbReference type="KEGG" id="cpa:CP_0701"/>
<dbReference type="KEGG" id="cpj:tufA"/>
<dbReference type="KEGG" id="cpn:CPn_0074"/>
<dbReference type="KEGG" id="cpt:CpB0074"/>
<dbReference type="PATRIC" id="fig|115713.3.peg.85"/>
<dbReference type="eggNOG" id="COG0050">
    <property type="taxonomic scope" value="Bacteria"/>
</dbReference>
<dbReference type="HOGENOM" id="CLU_007265_0_0_0"/>
<dbReference type="OMA" id="EGDKEWG"/>
<dbReference type="OrthoDB" id="9804504at2"/>
<dbReference type="Proteomes" id="UP000000583">
    <property type="component" value="Chromosome"/>
</dbReference>
<dbReference type="Proteomes" id="UP000000801">
    <property type="component" value="Chromosome"/>
</dbReference>
<dbReference type="GO" id="GO:0005829">
    <property type="term" value="C:cytosol"/>
    <property type="evidence" value="ECO:0007669"/>
    <property type="project" value="TreeGrafter"/>
</dbReference>
<dbReference type="GO" id="GO:0005525">
    <property type="term" value="F:GTP binding"/>
    <property type="evidence" value="ECO:0007669"/>
    <property type="project" value="UniProtKB-UniRule"/>
</dbReference>
<dbReference type="GO" id="GO:0003924">
    <property type="term" value="F:GTPase activity"/>
    <property type="evidence" value="ECO:0007669"/>
    <property type="project" value="InterPro"/>
</dbReference>
<dbReference type="GO" id="GO:0003746">
    <property type="term" value="F:translation elongation factor activity"/>
    <property type="evidence" value="ECO:0007669"/>
    <property type="project" value="UniProtKB-UniRule"/>
</dbReference>
<dbReference type="CDD" id="cd01884">
    <property type="entry name" value="EF_Tu"/>
    <property type="match status" value="1"/>
</dbReference>
<dbReference type="CDD" id="cd03697">
    <property type="entry name" value="EFTU_II"/>
    <property type="match status" value="1"/>
</dbReference>
<dbReference type="CDD" id="cd03707">
    <property type="entry name" value="EFTU_III"/>
    <property type="match status" value="1"/>
</dbReference>
<dbReference type="FunFam" id="2.40.30.10:FF:000002">
    <property type="entry name" value="Elongation factor Tu"/>
    <property type="match status" value="1"/>
</dbReference>
<dbReference type="FunFam" id="3.40.50.300:FF:000003">
    <property type="entry name" value="Elongation factor Tu"/>
    <property type="match status" value="1"/>
</dbReference>
<dbReference type="FunFam" id="2.40.30.10:FF:000020">
    <property type="entry name" value="Translation elongation factor EF-1"/>
    <property type="match status" value="1"/>
</dbReference>
<dbReference type="Gene3D" id="3.40.50.300">
    <property type="entry name" value="P-loop containing nucleotide triphosphate hydrolases"/>
    <property type="match status" value="1"/>
</dbReference>
<dbReference type="Gene3D" id="2.40.30.10">
    <property type="entry name" value="Translation factors"/>
    <property type="match status" value="2"/>
</dbReference>
<dbReference type="HAMAP" id="MF_00118_B">
    <property type="entry name" value="EF_Tu_B"/>
    <property type="match status" value="1"/>
</dbReference>
<dbReference type="InterPro" id="IPR041709">
    <property type="entry name" value="EF-Tu_GTP-bd"/>
</dbReference>
<dbReference type="InterPro" id="IPR050055">
    <property type="entry name" value="EF-Tu_GTPase"/>
</dbReference>
<dbReference type="InterPro" id="IPR004161">
    <property type="entry name" value="EFTu-like_2"/>
</dbReference>
<dbReference type="InterPro" id="IPR033720">
    <property type="entry name" value="EFTU_2"/>
</dbReference>
<dbReference type="InterPro" id="IPR031157">
    <property type="entry name" value="G_TR_CS"/>
</dbReference>
<dbReference type="InterPro" id="IPR027417">
    <property type="entry name" value="P-loop_NTPase"/>
</dbReference>
<dbReference type="InterPro" id="IPR005225">
    <property type="entry name" value="Small_GTP-bd"/>
</dbReference>
<dbReference type="InterPro" id="IPR000795">
    <property type="entry name" value="T_Tr_GTP-bd_dom"/>
</dbReference>
<dbReference type="InterPro" id="IPR009000">
    <property type="entry name" value="Transl_B-barrel_sf"/>
</dbReference>
<dbReference type="InterPro" id="IPR009001">
    <property type="entry name" value="Transl_elong_EF1A/Init_IF2_C"/>
</dbReference>
<dbReference type="InterPro" id="IPR004541">
    <property type="entry name" value="Transl_elong_EFTu/EF1A_bac/org"/>
</dbReference>
<dbReference type="InterPro" id="IPR004160">
    <property type="entry name" value="Transl_elong_EFTu/EF1A_C"/>
</dbReference>
<dbReference type="NCBIfam" id="TIGR00485">
    <property type="entry name" value="EF-Tu"/>
    <property type="match status" value="1"/>
</dbReference>
<dbReference type="NCBIfam" id="NF000766">
    <property type="entry name" value="PRK00049.1"/>
    <property type="match status" value="1"/>
</dbReference>
<dbReference type="NCBIfam" id="NF009372">
    <property type="entry name" value="PRK12735.1"/>
    <property type="match status" value="1"/>
</dbReference>
<dbReference type="NCBIfam" id="NF009373">
    <property type="entry name" value="PRK12736.1"/>
    <property type="match status" value="1"/>
</dbReference>
<dbReference type="NCBIfam" id="TIGR00231">
    <property type="entry name" value="small_GTP"/>
    <property type="match status" value="1"/>
</dbReference>
<dbReference type="PANTHER" id="PTHR43721:SF22">
    <property type="entry name" value="ELONGATION FACTOR TU, MITOCHONDRIAL"/>
    <property type="match status" value="1"/>
</dbReference>
<dbReference type="PANTHER" id="PTHR43721">
    <property type="entry name" value="ELONGATION FACTOR TU-RELATED"/>
    <property type="match status" value="1"/>
</dbReference>
<dbReference type="Pfam" id="PF00009">
    <property type="entry name" value="GTP_EFTU"/>
    <property type="match status" value="1"/>
</dbReference>
<dbReference type="Pfam" id="PF03144">
    <property type="entry name" value="GTP_EFTU_D2"/>
    <property type="match status" value="1"/>
</dbReference>
<dbReference type="Pfam" id="PF03143">
    <property type="entry name" value="GTP_EFTU_D3"/>
    <property type="match status" value="1"/>
</dbReference>
<dbReference type="PRINTS" id="PR00315">
    <property type="entry name" value="ELONGATNFCT"/>
</dbReference>
<dbReference type="SUPFAM" id="SSF50465">
    <property type="entry name" value="EF-Tu/eEF-1alpha/eIF2-gamma C-terminal domain"/>
    <property type="match status" value="1"/>
</dbReference>
<dbReference type="SUPFAM" id="SSF52540">
    <property type="entry name" value="P-loop containing nucleoside triphosphate hydrolases"/>
    <property type="match status" value="1"/>
</dbReference>
<dbReference type="SUPFAM" id="SSF50447">
    <property type="entry name" value="Translation proteins"/>
    <property type="match status" value="1"/>
</dbReference>
<dbReference type="PROSITE" id="PS00301">
    <property type="entry name" value="G_TR_1"/>
    <property type="match status" value="1"/>
</dbReference>
<dbReference type="PROSITE" id="PS51722">
    <property type="entry name" value="G_TR_2"/>
    <property type="match status" value="1"/>
</dbReference>
<feature type="initiator methionine" description="Removed" evidence="1">
    <location>
        <position position="1"/>
    </location>
</feature>
<feature type="chain" id="PRO_0000091307" description="Elongation factor Tu">
    <location>
        <begin position="2"/>
        <end position="394"/>
    </location>
</feature>
<feature type="domain" description="tr-type G">
    <location>
        <begin position="10"/>
        <end position="204"/>
    </location>
</feature>
<feature type="region of interest" description="G1" evidence="1">
    <location>
        <begin position="19"/>
        <end position="26"/>
    </location>
</feature>
<feature type="region of interest" description="G2" evidence="1">
    <location>
        <begin position="60"/>
        <end position="64"/>
    </location>
</feature>
<feature type="region of interest" description="G3" evidence="1">
    <location>
        <begin position="81"/>
        <end position="84"/>
    </location>
</feature>
<feature type="region of interest" description="G4" evidence="1">
    <location>
        <begin position="136"/>
        <end position="139"/>
    </location>
</feature>
<feature type="region of interest" description="G5" evidence="1">
    <location>
        <begin position="174"/>
        <end position="176"/>
    </location>
</feature>
<feature type="binding site" evidence="2">
    <location>
        <begin position="19"/>
        <end position="26"/>
    </location>
    <ligand>
        <name>GTP</name>
        <dbReference type="ChEBI" id="CHEBI:37565"/>
    </ligand>
</feature>
<feature type="binding site" evidence="2">
    <location>
        <position position="26"/>
    </location>
    <ligand>
        <name>Mg(2+)</name>
        <dbReference type="ChEBI" id="CHEBI:18420"/>
    </ligand>
</feature>
<feature type="binding site" evidence="2">
    <location>
        <begin position="81"/>
        <end position="85"/>
    </location>
    <ligand>
        <name>GTP</name>
        <dbReference type="ChEBI" id="CHEBI:37565"/>
    </ligand>
</feature>
<feature type="binding site" evidence="2">
    <location>
        <begin position="136"/>
        <end position="139"/>
    </location>
    <ligand>
        <name>GTP</name>
        <dbReference type="ChEBI" id="CHEBI:37565"/>
    </ligand>
</feature>
<reference key="1">
    <citation type="journal article" date="1999" name="Nat. Genet.">
        <title>Comparative genomes of Chlamydia pneumoniae and C. trachomatis.</title>
        <authorList>
            <person name="Kalman S."/>
            <person name="Mitchell W.P."/>
            <person name="Marathe R."/>
            <person name="Lammel C.J."/>
            <person name="Fan J."/>
            <person name="Hyman R.W."/>
            <person name="Olinger L."/>
            <person name="Grimwood J."/>
            <person name="Davis R.W."/>
            <person name="Stephens R.S."/>
        </authorList>
    </citation>
    <scope>NUCLEOTIDE SEQUENCE [LARGE SCALE GENOMIC DNA]</scope>
    <source>
        <strain>CWL029</strain>
    </source>
</reference>
<reference key="2">
    <citation type="journal article" date="2000" name="Nucleic Acids Res.">
        <title>Genome sequences of Chlamydia trachomatis MoPn and Chlamydia pneumoniae AR39.</title>
        <authorList>
            <person name="Read T.D."/>
            <person name="Brunham R.C."/>
            <person name="Shen C."/>
            <person name="Gill S.R."/>
            <person name="Heidelberg J.F."/>
            <person name="White O."/>
            <person name="Hickey E.K."/>
            <person name="Peterson J.D."/>
            <person name="Utterback T.R."/>
            <person name="Berry K.J."/>
            <person name="Bass S."/>
            <person name="Linher K.D."/>
            <person name="Weidman J.F."/>
            <person name="Khouri H.M."/>
            <person name="Craven B."/>
            <person name="Bowman C."/>
            <person name="Dodson R.J."/>
            <person name="Gwinn M.L."/>
            <person name="Nelson W.C."/>
            <person name="DeBoy R.T."/>
            <person name="Kolonay J.F."/>
            <person name="McClarty G."/>
            <person name="Salzberg S.L."/>
            <person name="Eisen J.A."/>
            <person name="Fraser C.M."/>
        </authorList>
    </citation>
    <scope>NUCLEOTIDE SEQUENCE [LARGE SCALE GENOMIC DNA]</scope>
    <source>
        <strain>AR39</strain>
    </source>
</reference>
<reference key="3">
    <citation type="journal article" date="2000" name="Nucleic Acids Res.">
        <title>Comparison of whole genome sequences of Chlamydia pneumoniae J138 from Japan and CWL029 from USA.</title>
        <authorList>
            <person name="Shirai M."/>
            <person name="Hirakawa H."/>
            <person name="Kimoto M."/>
            <person name="Tabuchi M."/>
            <person name="Kishi F."/>
            <person name="Ouchi K."/>
            <person name="Shiba T."/>
            <person name="Ishii K."/>
            <person name="Hattori M."/>
            <person name="Kuhara S."/>
            <person name="Nakazawa T."/>
        </authorList>
    </citation>
    <scope>NUCLEOTIDE SEQUENCE [LARGE SCALE GENOMIC DNA]</scope>
    <source>
        <strain>J138</strain>
    </source>
</reference>
<reference key="4">
    <citation type="submission" date="2002-05" db="EMBL/GenBank/DDBJ databases">
        <title>The genome sequence of Chlamydia pneumoniae TW183 and comparison with other Chlamydia strains based on whole genome sequence analysis.</title>
        <authorList>
            <person name="Geng M.M."/>
            <person name="Schuhmacher A."/>
            <person name="Muehldorfer I."/>
            <person name="Bensch K.W."/>
            <person name="Schaefer K.P."/>
            <person name="Schneider S."/>
            <person name="Pohl T."/>
            <person name="Essig A."/>
            <person name="Marre R."/>
            <person name="Melchers K."/>
        </authorList>
    </citation>
    <scope>NUCLEOTIDE SEQUENCE [LARGE SCALE GENOMIC DNA]</scope>
    <source>
        <strain>TW-183</strain>
    </source>
</reference>
<keyword id="KW-0963">Cytoplasm</keyword>
<keyword id="KW-0251">Elongation factor</keyword>
<keyword id="KW-0342">GTP-binding</keyword>
<keyword id="KW-0378">Hydrolase</keyword>
<keyword id="KW-0460">Magnesium</keyword>
<keyword id="KW-0479">Metal-binding</keyword>
<keyword id="KW-0547">Nucleotide-binding</keyword>
<keyword id="KW-0648">Protein biosynthesis</keyword>
<gene>
    <name evidence="2" type="primary">tuf</name>
    <name type="synonym">tufA</name>
    <name type="ordered locus">CPn_0074</name>
    <name type="ordered locus">CP_0701</name>
    <name type="ordered locus">CpB0074</name>
</gene>
<name>EFTU_CHLPN</name>
<evidence type="ECO:0000250" key="1"/>
<evidence type="ECO:0000255" key="2">
    <source>
        <dbReference type="HAMAP-Rule" id="MF_00118"/>
    </source>
</evidence>
<comment type="function">
    <text evidence="2">GTP hydrolase that promotes the GTP-dependent binding of aminoacyl-tRNA to the A-site of ribosomes during protein biosynthesis.</text>
</comment>
<comment type="catalytic activity">
    <reaction evidence="2">
        <text>GTP + H2O = GDP + phosphate + H(+)</text>
        <dbReference type="Rhea" id="RHEA:19669"/>
        <dbReference type="ChEBI" id="CHEBI:15377"/>
        <dbReference type="ChEBI" id="CHEBI:15378"/>
        <dbReference type="ChEBI" id="CHEBI:37565"/>
        <dbReference type="ChEBI" id="CHEBI:43474"/>
        <dbReference type="ChEBI" id="CHEBI:58189"/>
        <dbReference type="EC" id="3.6.5.3"/>
    </reaction>
    <physiologicalReaction direction="left-to-right" evidence="2">
        <dbReference type="Rhea" id="RHEA:19670"/>
    </physiologicalReaction>
</comment>
<comment type="subunit">
    <text evidence="2">Monomer.</text>
</comment>
<comment type="subcellular location">
    <subcellularLocation>
        <location evidence="2">Cytoplasm</location>
    </subcellularLocation>
</comment>
<comment type="similarity">
    <text evidence="2">Belongs to the TRAFAC class translation factor GTPase superfamily. Classic translation factor GTPase family. EF-Tu/EF-1A subfamily.</text>
</comment>
<organism>
    <name type="scientific">Chlamydia pneumoniae</name>
    <name type="common">Chlamydophila pneumoniae</name>
    <dbReference type="NCBI Taxonomy" id="83558"/>
    <lineage>
        <taxon>Bacteria</taxon>
        <taxon>Pseudomonadati</taxon>
        <taxon>Chlamydiota</taxon>
        <taxon>Chlamydiia</taxon>
        <taxon>Chlamydiales</taxon>
        <taxon>Chlamydiaceae</taxon>
        <taxon>Chlamydia/Chlamydophila group</taxon>
        <taxon>Chlamydia</taxon>
    </lineage>
</organism>